<evidence type="ECO:0000250" key="1">
    <source>
        <dbReference type="UniProtKB" id="P53112"/>
    </source>
</evidence>
<evidence type="ECO:0000256" key="2">
    <source>
        <dbReference type="SAM" id="MobiDB-lite"/>
    </source>
</evidence>
<evidence type="ECO:0000269" key="3">
    <source>
    </source>
</evidence>
<evidence type="ECO:0000269" key="4">
    <source>
    </source>
</evidence>
<evidence type="ECO:0000303" key="5">
    <source>
    </source>
</evidence>
<evidence type="ECO:0000305" key="6"/>
<evidence type="ECO:0000312" key="7">
    <source>
        <dbReference type="EMBL" id="AAG28574.1"/>
    </source>
</evidence>
<accession>Q9HG09</accession>
<gene>
    <name evidence="5" type="primary">PEX14</name>
</gene>
<dbReference type="EMBL" id="AF200421">
    <property type="protein sequence ID" value="AAG28574.1"/>
    <property type="molecule type" value="Genomic_DNA"/>
</dbReference>
<dbReference type="SMR" id="Q9HG09"/>
<dbReference type="GO" id="GO:1990429">
    <property type="term" value="C:peroxisomal importomer complex"/>
    <property type="evidence" value="ECO:0007669"/>
    <property type="project" value="TreeGrafter"/>
</dbReference>
<dbReference type="GO" id="GO:0005778">
    <property type="term" value="C:peroxisomal membrane"/>
    <property type="evidence" value="ECO:0000314"/>
    <property type="project" value="UniProtKB"/>
</dbReference>
<dbReference type="GO" id="GO:0005102">
    <property type="term" value="F:signaling receptor binding"/>
    <property type="evidence" value="ECO:0007669"/>
    <property type="project" value="TreeGrafter"/>
</dbReference>
<dbReference type="GO" id="GO:0016560">
    <property type="term" value="P:protein import into peroxisome matrix, docking"/>
    <property type="evidence" value="ECO:0000303"/>
    <property type="project" value="UniProtKB"/>
</dbReference>
<dbReference type="Gene3D" id="1.10.10.10">
    <property type="entry name" value="Winged helix-like DNA-binding domain superfamily/Winged helix DNA-binding domain"/>
    <property type="match status" value="1"/>
</dbReference>
<dbReference type="InterPro" id="IPR025655">
    <property type="entry name" value="PEX14"/>
</dbReference>
<dbReference type="InterPro" id="IPR006785">
    <property type="entry name" value="Pex14_N"/>
</dbReference>
<dbReference type="InterPro" id="IPR036388">
    <property type="entry name" value="WH-like_DNA-bd_sf"/>
</dbReference>
<dbReference type="PANTHER" id="PTHR23058">
    <property type="entry name" value="PEROXISOMAL MEMBRANE PROTEIN PEX14"/>
    <property type="match status" value="1"/>
</dbReference>
<dbReference type="PANTHER" id="PTHR23058:SF0">
    <property type="entry name" value="PEROXISOMAL MEMBRANE PROTEIN PEX14"/>
    <property type="match status" value="1"/>
</dbReference>
<dbReference type="Pfam" id="PF04695">
    <property type="entry name" value="Pex14_N"/>
    <property type="match status" value="1"/>
</dbReference>
<comment type="function">
    <text evidence="1 3">Component of the PEX13-PEX14 docking complex, a translocon channel that specifically mediates the import of peroxisomal cargo proteins bound to PEX5 or PEX20 receptors (PubMed:11329173). The PEX13-PEX14 docking complex forms a large import pore which can be opened to a diameter of about 9 nm (By similarity). Mechanistically, PEX5 (or PEX20) receptor along with cargo proteins associates with the PEX14 subunit of the PEX13-PEX14 docking complex in the cytosol, leading to the insertion of the receptor into the organelle membrane with the concomitant translocation of the cargo into the peroxisome matrix (By similarity).</text>
</comment>
<comment type="subunit">
    <text evidence="3 4">Interacts with PEX13 (via SH3 domain); forming the PEX13-PEX14 docking complex (PubMed:11329173). Interacts with PEX5 (via WxxxF/Y motifs) (PubMed:11329173). Interacts with PEX20 (via WxxxF/Y motifs) (PubMed:16390998). Interacts with PEX3, PEX7, PEX8 and PEX17 (PubMed:11329173).</text>
</comment>
<comment type="subcellular location">
    <subcellularLocation>
        <location evidence="3">Peroxisome membrane</location>
        <topology evidence="3">Peripheral membrane protein</topology>
        <orientation evidence="3">Cytoplasmic side</orientation>
    </subcellularLocation>
</comment>
<comment type="PTM">
    <text evidence="3">Phosphorylated on serine or threonine residues.</text>
</comment>
<comment type="similarity">
    <text evidence="6">Belongs to the peroxin-14 family.</text>
</comment>
<name>PEX14_PICPA</name>
<organism>
    <name type="scientific">Komagataella pastoris</name>
    <name type="common">Yeast</name>
    <name type="synonym">Pichia pastoris</name>
    <dbReference type="NCBI Taxonomy" id="4922"/>
    <lineage>
        <taxon>Eukaryota</taxon>
        <taxon>Fungi</taxon>
        <taxon>Dikarya</taxon>
        <taxon>Ascomycota</taxon>
        <taxon>Saccharomycotina</taxon>
        <taxon>Pichiomycetes</taxon>
        <taxon>Pichiales</taxon>
        <taxon>Pichiaceae</taxon>
        <taxon>Komagataella</taxon>
    </lineage>
</organism>
<protein>
    <recommendedName>
        <fullName>Peroxisomal membrane protein PEX14</fullName>
    </recommendedName>
    <alternativeName>
        <fullName>Peroxin-14</fullName>
    </alternativeName>
</protein>
<reference evidence="6 7" key="1">
    <citation type="journal article" date="2001" name="Yeast">
        <title>Pichia pastoris Pex14p, a phosphorylated peroxisomal membrane protein, is part of a PTS-receptor docking complex and interacts with many peroxins.</title>
        <authorList>
            <person name="Johnson M.A."/>
            <person name="Snyder W.B."/>
            <person name="Cereghino J.L."/>
            <person name="Veenhuis M."/>
            <person name="Subramani S."/>
            <person name="Cregg J.M."/>
        </authorList>
    </citation>
    <scope>NUCLEOTIDE SEQUENCE [GENOMIC DNA]</scope>
    <scope>SUBCELLULAR LOCATION</scope>
    <scope>INTERACTION WITH PEX3; PEX5; PEX7; PEX8; PEX13 AND PEX17</scope>
    <scope>PHOSPHORYLATION</scope>
</reference>
<reference key="2">
    <citation type="journal article" date="2006" name="J. Cell Biol.">
        <title>Dynamics of the peroxisomal import cycle of PpPex20p: ubiquitin-dependent localization and regulation.</title>
        <authorList>
            <person name="Leon S."/>
            <person name="Zhang L."/>
            <person name="McDonald W.H."/>
            <person name="Yates J. III"/>
            <person name="Cregg J.M."/>
            <person name="Subramani S."/>
        </authorList>
    </citation>
    <scope>INTERACTION WITH PEX20</scope>
</reference>
<proteinExistence type="evidence at protein level"/>
<sequence>MSSIREEMVTSAVEFLKNPQIADSPLAKKIEFIESKGLNEAEVKEALLRSQGGNGSSSVASQVSSYSPSASQSSVAPSPPPFPDHYRNAPPLPERDWKDYFVMATATAGVSFGLYKVISNYVLPKLLPPSKEAIELDKEAIDREFTRVEALLNTFEEDQKAFYEEQREKSGKIEDTLTEIDAIISKTNEKNLNNEESLKYLKLEIESIKNTLMKNIDSQKSTISSELGSIEAQLDELKKLIVAKPEDEPIRAAPQPSLTTGANSLTSESSGRSSIPHSQSVPIRTQLTTPPSDSDTSGPAKLHIPPATSIPSLKDILRKEKNRTVDTFSKSNLGKDLESVAQSDPDKVEKYEGRRDLKSLERPEEDEKKEDDVEDGGDKDKLASSLESVKLPPSSEQVQAPAPKERTSSSSSRSGIPAWQLAAQS</sequence>
<keyword id="KW-0472">Membrane</keyword>
<keyword id="KW-0576">Peroxisome</keyword>
<keyword id="KW-0597">Phosphoprotein</keyword>
<keyword id="KW-0653">Protein transport</keyword>
<keyword id="KW-0811">Translocation</keyword>
<keyword id="KW-0813">Transport</keyword>
<feature type="chain" id="PRO_0000058328" description="Peroxisomal membrane protein PEX14">
    <location>
        <begin position="1"/>
        <end position="425"/>
    </location>
</feature>
<feature type="region of interest" description="Disordered" evidence="2">
    <location>
        <begin position="49"/>
        <end position="89"/>
    </location>
</feature>
<feature type="region of interest" description="Disordered" evidence="2">
    <location>
        <begin position="247"/>
        <end position="425"/>
    </location>
</feature>
<feature type="short sequence motif" description="SH3-binding" evidence="1">
    <location>
        <begin position="89"/>
        <end position="97"/>
    </location>
</feature>
<feature type="compositionally biased region" description="Low complexity" evidence="2">
    <location>
        <begin position="56"/>
        <end position="76"/>
    </location>
</feature>
<feature type="compositionally biased region" description="Polar residues" evidence="2">
    <location>
        <begin position="256"/>
        <end position="297"/>
    </location>
</feature>
<feature type="compositionally biased region" description="Basic and acidic residues" evidence="2">
    <location>
        <begin position="315"/>
        <end position="324"/>
    </location>
</feature>
<feature type="compositionally biased region" description="Basic and acidic residues" evidence="2">
    <location>
        <begin position="333"/>
        <end position="366"/>
    </location>
</feature>